<accession>Q5FQ35</accession>
<reference key="1">
    <citation type="journal article" date="2005" name="Nat. Biotechnol.">
        <title>Complete genome sequence of the acetic acid bacterium Gluconobacter oxydans.</title>
        <authorList>
            <person name="Prust C."/>
            <person name="Hoffmeister M."/>
            <person name="Liesegang H."/>
            <person name="Wiezer A."/>
            <person name="Fricke W.F."/>
            <person name="Ehrenreich A."/>
            <person name="Gottschalk G."/>
            <person name="Deppenmeier U."/>
        </authorList>
    </citation>
    <scope>NUCLEOTIDE SEQUENCE [LARGE SCALE GENOMIC DNA]</scope>
    <source>
        <strain>621H</strain>
    </source>
</reference>
<sequence length="444" mass="49905">MKLRFAPSPTGYLHVGNARLAVANFLFARHNGAKFLLRIDDTDTTRGKPEYEEAIGKDLSWLGLKWDEYVRQSERLDRYAEVIEKLKASGRLYPCFETEYELNAKREARIRAGKAPIYDRAMLKLTADQRARAEANGKTPHWRFRLSDGSRKWQDLVMDECSVKLTAISDPVLVRGDGTILYTLASVIDDLDMGITHIVRGEDHVTNTGVQIDIAEALGAKPDHFTFAHLPLLLDSDGGKLSKRFDSLALKSLRQDGLEPMSIVSYLARVGSSDDPQVMTMDEAIAAYDISHVSKSAARFDMTQLLALNRRALHNLPFEDAKIHLPPEADETFWHAVRGNVDLSAEIPHWWDVVHGTIIPPSQPEDRAFLQHALDTLPAEPWGEETWKDWTNALKEQSGRKGRSLFMPLRLALTGEDAGPELHVLLGLMGRERTVARLRDAIQA</sequence>
<feature type="chain" id="PRO_0000119570" description="Glutamate--tRNA ligase 2">
    <location>
        <begin position="1"/>
        <end position="444"/>
    </location>
</feature>
<feature type="short sequence motif" description="'HIGH' region" evidence="1">
    <location>
        <begin position="7"/>
        <end position="17"/>
    </location>
</feature>
<feature type="short sequence motif" description="'KMSKS' region" evidence="1">
    <location>
        <begin position="240"/>
        <end position="244"/>
    </location>
</feature>
<feature type="binding site" evidence="1">
    <location>
        <position position="243"/>
    </location>
    <ligand>
        <name>ATP</name>
        <dbReference type="ChEBI" id="CHEBI:30616"/>
    </ligand>
</feature>
<name>SYE2_GLUOX</name>
<evidence type="ECO:0000255" key="1">
    <source>
        <dbReference type="HAMAP-Rule" id="MF_00022"/>
    </source>
</evidence>
<gene>
    <name evidence="1" type="primary">gltX2</name>
    <name type="ordered locus">GOX1772</name>
</gene>
<comment type="function">
    <text evidence="1">Catalyzes the attachment of glutamate to tRNA(Glu) in a two-step reaction: glutamate is first activated by ATP to form Glu-AMP and then transferred to the acceptor end of tRNA(Glu).</text>
</comment>
<comment type="catalytic activity">
    <reaction evidence="1">
        <text>tRNA(Glu) + L-glutamate + ATP = L-glutamyl-tRNA(Glu) + AMP + diphosphate</text>
        <dbReference type="Rhea" id="RHEA:23540"/>
        <dbReference type="Rhea" id="RHEA-COMP:9663"/>
        <dbReference type="Rhea" id="RHEA-COMP:9680"/>
        <dbReference type="ChEBI" id="CHEBI:29985"/>
        <dbReference type="ChEBI" id="CHEBI:30616"/>
        <dbReference type="ChEBI" id="CHEBI:33019"/>
        <dbReference type="ChEBI" id="CHEBI:78442"/>
        <dbReference type="ChEBI" id="CHEBI:78520"/>
        <dbReference type="ChEBI" id="CHEBI:456215"/>
        <dbReference type="EC" id="6.1.1.17"/>
    </reaction>
</comment>
<comment type="subunit">
    <text evidence="1">Monomer.</text>
</comment>
<comment type="subcellular location">
    <subcellularLocation>
        <location evidence="1">Cytoplasm</location>
    </subcellularLocation>
</comment>
<comment type="similarity">
    <text evidence="1">Belongs to the class-I aminoacyl-tRNA synthetase family. Glutamate--tRNA ligase type 1 subfamily.</text>
</comment>
<proteinExistence type="inferred from homology"/>
<dbReference type="EC" id="6.1.1.17" evidence="1"/>
<dbReference type="EMBL" id="CP000009">
    <property type="protein sequence ID" value="AAW61511.1"/>
    <property type="molecule type" value="Genomic_DNA"/>
</dbReference>
<dbReference type="RefSeq" id="WP_011253292.1">
    <property type="nucleotide sequence ID" value="NC_006677.1"/>
</dbReference>
<dbReference type="SMR" id="Q5FQ35"/>
<dbReference type="STRING" id="290633.GOX1772"/>
<dbReference type="KEGG" id="gox:GOX1772"/>
<dbReference type="eggNOG" id="COG0008">
    <property type="taxonomic scope" value="Bacteria"/>
</dbReference>
<dbReference type="HOGENOM" id="CLU_015768_6_1_5"/>
<dbReference type="Proteomes" id="UP000006375">
    <property type="component" value="Chromosome"/>
</dbReference>
<dbReference type="GO" id="GO:0005829">
    <property type="term" value="C:cytosol"/>
    <property type="evidence" value="ECO:0007669"/>
    <property type="project" value="TreeGrafter"/>
</dbReference>
<dbReference type="GO" id="GO:0005524">
    <property type="term" value="F:ATP binding"/>
    <property type="evidence" value="ECO:0007669"/>
    <property type="project" value="UniProtKB-UniRule"/>
</dbReference>
<dbReference type="GO" id="GO:0004818">
    <property type="term" value="F:glutamate-tRNA ligase activity"/>
    <property type="evidence" value="ECO:0007669"/>
    <property type="project" value="UniProtKB-UniRule"/>
</dbReference>
<dbReference type="GO" id="GO:0000049">
    <property type="term" value="F:tRNA binding"/>
    <property type="evidence" value="ECO:0007669"/>
    <property type="project" value="InterPro"/>
</dbReference>
<dbReference type="GO" id="GO:0008270">
    <property type="term" value="F:zinc ion binding"/>
    <property type="evidence" value="ECO:0007669"/>
    <property type="project" value="InterPro"/>
</dbReference>
<dbReference type="GO" id="GO:0006424">
    <property type="term" value="P:glutamyl-tRNA aminoacylation"/>
    <property type="evidence" value="ECO:0007669"/>
    <property type="project" value="UniProtKB-UniRule"/>
</dbReference>
<dbReference type="CDD" id="cd00808">
    <property type="entry name" value="GluRS_core"/>
    <property type="match status" value="1"/>
</dbReference>
<dbReference type="Gene3D" id="1.10.10.350">
    <property type="match status" value="1"/>
</dbReference>
<dbReference type="Gene3D" id="3.40.50.620">
    <property type="entry name" value="HUPs"/>
    <property type="match status" value="1"/>
</dbReference>
<dbReference type="HAMAP" id="MF_00022">
    <property type="entry name" value="Glu_tRNA_synth_type1"/>
    <property type="match status" value="1"/>
</dbReference>
<dbReference type="InterPro" id="IPR045462">
    <property type="entry name" value="aa-tRNA-synth_I_cd-bd"/>
</dbReference>
<dbReference type="InterPro" id="IPR020751">
    <property type="entry name" value="aa-tRNA-synth_I_codon-bd_sub2"/>
</dbReference>
<dbReference type="InterPro" id="IPR001412">
    <property type="entry name" value="aa-tRNA-synth_I_CS"/>
</dbReference>
<dbReference type="InterPro" id="IPR008925">
    <property type="entry name" value="aa_tRNA-synth_I_cd-bd_sf"/>
</dbReference>
<dbReference type="InterPro" id="IPR004527">
    <property type="entry name" value="Glu-tRNA-ligase_bac/mito"/>
</dbReference>
<dbReference type="InterPro" id="IPR000924">
    <property type="entry name" value="Glu/Gln-tRNA-synth"/>
</dbReference>
<dbReference type="InterPro" id="IPR020058">
    <property type="entry name" value="Glu/Gln-tRNA-synth_Ib_cat-dom"/>
</dbReference>
<dbReference type="InterPro" id="IPR049940">
    <property type="entry name" value="GluQ/Sye"/>
</dbReference>
<dbReference type="InterPro" id="IPR033910">
    <property type="entry name" value="GluRS_core"/>
</dbReference>
<dbReference type="InterPro" id="IPR014729">
    <property type="entry name" value="Rossmann-like_a/b/a_fold"/>
</dbReference>
<dbReference type="NCBIfam" id="TIGR00464">
    <property type="entry name" value="gltX_bact"/>
    <property type="match status" value="1"/>
</dbReference>
<dbReference type="PANTHER" id="PTHR43311">
    <property type="entry name" value="GLUTAMATE--TRNA LIGASE"/>
    <property type="match status" value="1"/>
</dbReference>
<dbReference type="PANTHER" id="PTHR43311:SF2">
    <property type="entry name" value="GLUTAMATE--TRNA LIGASE, MITOCHONDRIAL-RELATED"/>
    <property type="match status" value="1"/>
</dbReference>
<dbReference type="Pfam" id="PF19269">
    <property type="entry name" value="Anticodon_2"/>
    <property type="match status" value="1"/>
</dbReference>
<dbReference type="Pfam" id="PF00749">
    <property type="entry name" value="tRNA-synt_1c"/>
    <property type="match status" value="1"/>
</dbReference>
<dbReference type="PRINTS" id="PR00987">
    <property type="entry name" value="TRNASYNTHGLU"/>
</dbReference>
<dbReference type="SUPFAM" id="SSF48163">
    <property type="entry name" value="An anticodon-binding domain of class I aminoacyl-tRNA synthetases"/>
    <property type="match status" value="1"/>
</dbReference>
<dbReference type="SUPFAM" id="SSF52374">
    <property type="entry name" value="Nucleotidylyl transferase"/>
    <property type="match status" value="1"/>
</dbReference>
<dbReference type="PROSITE" id="PS00178">
    <property type="entry name" value="AA_TRNA_LIGASE_I"/>
    <property type="match status" value="1"/>
</dbReference>
<protein>
    <recommendedName>
        <fullName evidence="1">Glutamate--tRNA ligase 2</fullName>
        <ecNumber evidence="1">6.1.1.17</ecNumber>
    </recommendedName>
    <alternativeName>
        <fullName evidence="1">Glutamyl-tRNA synthetase 2</fullName>
        <shortName evidence="1">GluRS 2</shortName>
    </alternativeName>
</protein>
<keyword id="KW-0030">Aminoacyl-tRNA synthetase</keyword>
<keyword id="KW-0067">ATP-binding</keyword>
<keyword id="KW-0963">Cytoplasm</keyword>
<keyword id="KW-0436">Ligase</keyword>
<keyword id="KW-0547">Nucleotide-binding</keyword>
<keyword id="KW-0648">Protein biosynthesis</keyword>
<keyword id="KW-1185">Reference proteome</keyword>
<organism>
    <name type="scientific">Gluconobacter oxydans (strain 621H)</name>
    <name type="common">Gluconobacter suboxydans</name>
    <dbReference type="NCBI Taxonomy" id="290633"/>
    <lineage>
        <taxon>Bacteria</taxon>
        <taxon>Pseudomonadati</taxon>
        <taxon>Pseudomonadota</taxon>
        <taxon>Alphaproteobacteria</taxon>
        <taxon>Acetobacterales</taxon>
        <taxon>Acetobacteraceae</taxon>
        <taxon>Gluconobacter</taxon>
    </lineage>
</organism>